<gene>
    <name evidence="1" type="primary">gatA</name>
    <name type="ordered locus">SPN23F04100</name>
</gene>
<proteinExistence type="inferred from homology"/>
<evidence type="ECO:0000255" key="1">
    <source>
        <dbReference type="HAMAP-Rule" id="MF_00120"/>
    </source>
</evidence>
<dbReference type="EC" id="6.3.5.7" evidence="1"/>
<dbReference type="EMBL" id="FM211187">
    <property type="protein sequence ID" value="CAR68259.1"/>
    <property type="molecule type" value="Genomic_DNA"/>
</dbReference>
<dbReference type="RefSeq" id="WP_000143735.1">
    <property type="nucleotide sequence ID" value="NC_011900.1"/>
</dbReference>
<dbReference type="SMR" id="B8ZLK1"/>
<dbReference type="KEGG" id="sne:SPN23F04100"/>
<dbReference type="HOGENOM" id="CLU_009600_0_3_9"/>
<dbReference type="GO" id="GO:0030956">
    <property type="term" value="C:glutamyl-tRNA(Gln) amidotransferase complex"/>
    <property type="evidence" value="ECO:0007669"/>
    <property type="project" value="InterPro"/>
</dbReference>
<dbReference type="GO" id="GO:0005524">
    <property type="term" value="F:ATP binding"/>
    <property type="evidence" value="ECO:0007669"/>
    <property type="project" value="UniProtKB-KW"/>
</dbReference>
<dbReference type="GO" id="GO:0050567">
    <property type="term" value="F:glutaminyl-tRNA synthase (glutamine-hydrolyzing) activity"/>
    <property type="evidence" value="ECO:0007669"/>
    <property type="project" value="UniProtKB-UniRule"/>
</dbReference>
<dbReference type="GO" id="GO:0006412">
    <property type="term" value="P:translation"/>
    <property type="evidence" value="ECO:0007669"/>
    <property type="project" value="UniProtKB-UniRule"/>
</dbReference>
<dbReference type="Gene3D" id="3.90.1300.10">
    <property type="entry name" value="Amidase signature (AS) domain"/>
    <property type="match status" value="1"/>
</dbReference>
<dbReference type="HAMAP" id="MF_00120">
    <property type="entry name" value="GatA"/>
    <property type="match status" value="1"/>
</dbReference>
<dbReference type="InterPro" id="IPR000120">
    <property type="entry name" value="Amidase"/>
</dbReference>
<dbReference type="InterPro" id="IPR020556">
    <property type="entry name" value="Amidase_CS"/>
</dbReference>
<dbReference type="InterPro" id="IPR023631">
    <property type="entry name" value="Amidase_dom"/>
</dbReference>
<dbReference type="InterPro" id="IPR036928">
    <property type="entry name" value="AS_sf"/>
</dbReference>
<dbReference type="InterPro" id="IPR004412">
    <property type="entry name" value="GatA"/>
</dbReference>
<dbReference type="NCBIfam" id="TIGR00132">
    <property type="entry name" value="gatA"/>
    <property type="match status" value="1"/>
</dbReference>
<dbReference type="PANTHER" id="PTHR11895:SF151">
    <property type="entry name" value="GLUTAMYL-TRNA(GLN) AMIDOTRANSFERASE SUBUNIT A"/>
    <property type="match status" value="1"/>
</dbReference>
<dbReference type="PANTHER" id="PTHR11895">
    <property type="entry name" value="TRANSAMIDASE"/>
    <property type="match status" value="1"/>
</dbReference>
<dbReference type="Pfam" id="PF01425">
    <property type="entry name" value="Amidase"/>
    <property type="match status" value="1"/>
</dbReference>
<dbReference type="SUPFAM" id="SSF75304">
    <property type="entry name" value="Amidase signature (AS) enzymes"/>
    <property type="match status" value="1"/>
</dbReference>
<dbReference type="PROSITE" id="PS00571">
    <property type="entry name" value="AMIDASES"/>
    <property type="match status" value="1"/>
</dbReference>
<protein>
    <recommendedName>
        <fullName evidence="1">Glutamyl-tRNA(Gln) amidotransferase subunit A</fullName>
        <shortName evidence="1">Glu-ADT subunit A</shortName>
        <ecNumber evidence="1">6.3.5.7</ecNumber>
    </recommendedName>
</protein>
<comment type="function">
    <text evidence="1">Allows the formation of correctly charged Gln-tRNA(Gln) through the transamidation of misacylated Glu-tRNA(Gln) in organisms which lack glutaminyl-tRNA synthetase. The reaction takes place in the presence of glutamine and ATP through an activated gamma-phospho-Glu-tRNA(Gln).</text>
</comment>
<comment type="catalytic activity">
    <reaction evidence="1">
        <text>L-glutamyl-tRNA(Gln) + L-glutamine + ATP + H2O = L-glutaminyl-tRNA(Gln) + L-glutamate + ADP + phosphate + H(+)</text>
        <dbReference type="Rhea" id="RHEA:17521"/>
        <dbReference type="Rhea" id="RHEA-COMP:9681"/>
        <dbReference type="Rhea" id="RHEA-COMP:9684"/>
        <dbReference type="ChEBI" id="CHEBI:15377"/>
        <dbReference type="ChEBI" id="CHEBI:15378"/>
        <dbReference type="ChEBI" id="CHEBI:29985"/>
        <dbReference type="ChEBI" id="CHEBI:30616"/>
        <dbReference type="ChEBI" id="CHEBI:43474"/>
        <dbReference type="ChEBI" id="CHEBI:58359"/>
        <dbReference type="ChEBI" id="CHEBI:78520"/>
        <dbReference type="ChEBI" id="CHEBI:78521"/>
        <dbReference type="ChEBI" id="CHEBI:456216"/>
        <dbReference type="EC" id="6.3.5.7"/>
    </reaction>
</comment>
<comment type="subunit">
    <text evidence="1">Heterotrimer of A, B and C subunits.</text>
</comment>
<comment type="similarity">
    <text evidence="1">Belongs to the amidase family. GatA subfamily.</text>
</comment>
<keyword id="KW-0067">ATP-binding</keyword>
<keyword id="KW-0436">Ligase</keyword>
<keyword id="KW-0547">Nucleotide-binding</keyword>
<keyword id="KW-0648">Protein biosynthesis</keyword>
<name>GATA_STRPJ</name>
<accession>B8ZLK1</accession>
<organism>
    <name type="scientific">Streptococcus pneumoniae (strain ATCC 700669 / Spain 23F-1)</name>
    <dbReference type="NCBI Taxonomy" id="561276"/>
    <lineage>
        <taxon>Bacteria</taxon>
        <taxon>Bacillati</taxon>
        <taxon>Bacillota</taxon>
        <taxon>Bacilli</taxon>
        <taxon>Lactobacillales</taxon>
        <taxon>Streptococcaceae</taxon>
        <taxon>Streptococcus</taxon>
    </lineage>
</organism>
<sequence>MTFNNKTIEELHNLLVSKEISATELTQATLENIKSREEALNSFVTIAEEQALVQAKAIDEAGIDADNVLSGIPLAVKDNISTDGILTTAASKMLYNYEPIFDATAVANAKTKGMIVVGKTNMDEFAMGGSGETSHYGATKNAWDHSKVPGGSSSGSAAAVASGQVRLSLGSDTGGSIRQPAAFNGIVGLKPTYGTVSRFGLIAFGSSLDQIGPFAPTVKENALLLNAIASEDAKDSTSAPVRIADFTSKIGQDIKGMKIALPKEYLGEGIDPEVKETILNAAKHFEKLGAIVEEVSLPHSKYGVAVYYIIASSEASSNLQRFDGIRYGYRAEDATNLDEIYVNSRSQGFGEEVKRRIMLGTFSLSSGYYDAYYKKAGQVRTLIIQDFEKVFADYDLILGPTAPSVAYDLDSLNHDPVAMYLADLLTIPVNLAGLPGISIPAGFSQGLPVGLQLIGPKHSEETIYQVAAAFEATTGYHKQQPVIFGGDN</sequence>
<reference key="1">
    <citation type="journal article" date="2009" name="J. Bacteriol.">
        <title>Role of conjugative elements in the evolution of the multidrug-resistant pandemic clone Streptococcus pneumoniae Spain23F ST81.</title>
        <authorList>
            <person name="Croucher N.J."/>
            <person name="Walker D."/>
            <person name="Romero P."/>
            <person name="Lennard N."/>
            <person name="Paterson G.K."/>
            <person name="Bason N.C."/>
            <person name="Mitchell A.M."/>
            <person name="Quail M.A."/>
            <person name="Andrew P.W."/>
            <person name="Parkhill J."/>
            <person name="Bentley S.D."/>
            <person name="Mitchell T.J."/>
        </authorList>
    </citation>
    <scope>NUCLEOTIDE SEQUENCE [LARGE SCALE GENOMIC DNA]</scope>
    <source>
        <strain>ATCC 700669 / Spain 23F-1</strain>
    </source>
</reference>
<feature type="chain" id="PRO_1000122492" description="Glutamyl-tRNA(Gln) amidotransferase subunit A">
    <location>
        <begin position="1"/>
        <end position="488"/>
    </location>
</feature>
<feature type="active site" description="Charge relay system" evidence="1">
    <location>
        <position position="77"/>
    </location>
</feature>
<feature type="active site" description="Charge relay system" evidence="1">
    <location>
        <position position="152"/>
    </location>
</feature>
<feature type="active site" description="Acyl-ester intermediate" evidence="1">
    <location>
        <position position="176"/>
    </location>
</feature>